<gene>
    <name evidence="2" type="primary">uvrB</name>
    <name type="ordered locus">c0860</name>
</gene>
<comment type="function">
    <text evidence="2">The UvrABC repair system catalyzes the recognition and processing of DNA lesions. A damage recognition complex composed of 2 UvrA and 2 UvrB subunits scans DNA for abnormalities. Upon binding of the UvrA(2)B(2) complex to a putative damaged site, the DNA wraps around one UvrB monomer. DNA wrap is dependent on ATP binding by UvrB and probably causes local melting of the DNA helix, facilitating insertion of UvrB beta-hairpin between the DNA strands. Then UvrB probes one DNA strand for the presence of a lesion. If a lesion is found the UvrA subunits dissociate and the UvrB-DNA preincision complex is formed. This complex is subsequently bound by UvrC and the second UvrB is released. If no lesion is found, the DNA wraps around the other UvrB subunit that will check the other stand for damage.</text>
</comment>
<comment type="subunit">
    <text evidence="2">Forms a heterotetramer with UvrA during the search for lesions. Interacts with UvrC in an incision complex.</text>
</comment>
<comment type="subcellular location">
    <subcellularLocation>
        <location evidence="2">Cytoplasm</location>
    </subcellularLocation>
</comment>
<comment type="domain">
    <text evidence="2">The beta-hairpin motif is involved in DNA binding.</text>
</comment>
<comment type="similarity">
    <text evidence="2">Belongs to the UvrB family.</text>
</comment>
<name>UVRB_ECOL6</name>
<dbReference type="EMBL" id="AE014075">
    <property type="protein sequence ID" value="AAN79333.1"/>
    <property type="molecule type" value="Genomic_DNA"/>
</dbReference>
<dbReference type="RefSeq" id="WP_000042540.1">
    <property type="nucleotide sequence ID" value="NC_004431.1"/>
</dbReference>
<dbReference type="STRING" id="199310.c0860"/>
<dbReference type="KEGG" id="ecc:c0860"/>
<dbReference type="eggNOG" id="COG0556">
    <property type="taxonomic scope" value="Bacteria"/>
</dbReference>
<dbReference type="HOGENOM" id="CLU_009621_2_1_6"/>
<dbReference type="BioCyc" id="ECOL199310:C0860-MONOMER"/>
<dbReference type="Proteomes" id="UP000001410">
    <property type="component" value="Chromosome"/>
</dbReference>
<dbReference type="GO" id="GO:0005737">
    <property type="term" value="C:cytoplasm"/>
    <property type="evidence" value="ECO:0007669"/>
    <property type="project" value="UniProtKB-SubCell"/>
</dbReference>
<dbReference type="GO" id="GO:0009380">
    <property type="term" value="C:excinuclease repair complex"/>
    <property type="evidence" value="ECO:0007669"/>
    <property type="project" value="InterPro"/>
</dbReference>
<dbReference type="GO" id="GO:0005524">
    <property type="term" value="F:ATP binding"/>
    <property type="evidence" value="ECO:0007669"/>
    <property type="project" value="UniProtKB-UniRule"/>
</dbReference>
<dbReference type="GO" id="GO:0016887">
    <property type="term" value="F:ATP hydrolysis activity"/>
    <property type="evidence" value="ECO:0007669"/>
    <property type="project" value="InterPro"/>
</dbReference>
<dbReference type="GO" id="GO:0003677">
    <property type="term" value="F:DNA binding"/>
    <property type="evidence" value="ECO:0007669"/>
    <property type="project" value="UniProtKB-UniRule"/>
</dbReference>
<dbReference type="GO" id="GO:0009381">
    <property type="term" value="F:excinuclease ABC activity"/>
    <property type="evidence" value="ECO:0007669"/>
    <property type="project" value="UniProtKB-UniRule"/>
</dbReference>
<dbReference type="GO" id="GO:0006289">
    <property type="term" value="P:nucleotide-excision repair"/>
    <property type="evidence" value="ECO:0007669"/>
    <property type="project" value="UniProtKB-UniRule"/>
</dbReference>
<dbReference type="GO" id="GO:0009432">
    <property type="term" value="P:SOS response"/>
    <property type="evidence" value="ECO:0007669"/>
    <property type="project" value="UniProtKB-UniRule"/>
</dbReference>
<dbReference type="CDD" id="cd17916">
    <property type="entry name" value="DEXHc_UvrB"/>
    <property type="match status" value="1"/>
</dbReference>
<dbReference type="CDD" id="cd18790">
    <property type="entry name" value="SF2_C_UvrB"/>
    <property type="match status" value="1"/>
</dbReference>
<dbReference type="FunFam" id="3.40.50.300:FF:000257">
    <property type="entry name" value="UvrABC system protein B"/>
    <property type="match status" value="1"/>
</dbReference>
<dbReference type="FunFam" id="3.40.50.300:FF:000401">
    <property type="entry name" value="UvrABC system protein B"/>
    <property type="match status" value="1"/>
</dbReference>
<dbReference type="FunFam" id="3.40.50.300:FF:000477">
    <property type="entry name" value="UvrABC system protein B"/>
    <property type="match status" value="1"/>
</dbReference>
<dbReference type="Gene3D" id="3.40.50.300">
    <property type="entry name" value="P-loop containing nucleotide triphosphate hydrolases"/>
    <property type="match status" value="3"/>
</dbReference>
<dbReference type="Gene3D" id="4.10.860.10">
    <property type="entry name" value="UVR domain"/>
    <property type="match status" value="1"/>
</dbReference>
<dbReference type="HAMAP" id="MF_00204">
    <property type="entry name" value="UvrB"/>
    <property type="match status" value="1"/>
</dbReference>
<dbReference type="InterPro" id="IPR006935">
    <property type="entry name" value="Helicase/UvrB_N"/>
</dbReference>
<dbReference type="InterPro" id="IPR014001">
    <property type="entry name" value="Helicase_ATP-bd"/>
</dbReference>
<dbReference type="InterPro" id="IPR001650">
    <property type="entry name" value="Helicase_C-like"/>
</dbReference>
<dbReference type="InterPro" id="IPR027417">
    <property type="entry name" value="P-loop_NTPase"/>
</dbReference>
<dbReference type="InterPro" id="IPR001943">
    <property type="entry name" value="UVR_dom"/>
</dbReference>
<dbReference type="InterPro" id="IPR036876">
    <property type="entry name" value="UVR_dom_sf"/>
</dbReference>
<dbReference type="InterPro" id="IPR004807">
    <property type="entry name" value="UvrB"/>
</dbReference>
<dbReference type="InterPro" id="IPR041471">
    <property type="entry name" value="UvrB_inter"/>
</dbReference>
<dbReference type="InterPro" id="IPR024759">
    <property type="entry name" value="UvrB_YAD/RRR_dom"/>
</dbReference>
<dbReference type="NCBIfam" id="NF003673">
    <property type="entry name" value="PRK05298.1"/>
    <property type="match status" value="1"/>
</dbReference>
<dbReference type="NCBIfam" id="TIGR00631">
    <property type="entry name" value="uvrb"/>
    <property type="match status" value="1"/>
</dbReference>
<dbReference type="PANTHER" id="PTHR24029">
    <property type="entry name" value="UVRABC SYSTEM PROTEIN B"/>
    <property type="match status" value="1"/>
</dbReference>
<dbReference type="PANTHER" id="PTHR24029:SF0">
    <property type="entry name" value="UVRABC SYSTEM PROTEIN B"/>
    <property type="match status" value="1"/>
</dbReference>
<dbReference type="Pfam" id="PF00271">
    <property type="entry name" value="Helicase_C"/>
    <property type="match status" value="1"/>
</dbReference>
<dbReference type="Pfam" id="PF04851">
    <property type="entry name" value="ResIII"/>
    <property type="match status" value="1"/>
</dbReference>
<dbReference type="Pfam" id="PF02151">
    <property type="entry name" value="UVR"/>
    <property type="match status" value="1"/>
</dbReference>
<dbReference type="Pfam" id="PF12344">
    <property type="entry name" value="UvrB"/>
    <property type="match status" value="1"/>
</dbReference>
<dbReference type="Pfam" id="PF17757">
    <property type="entry name" value="UvrB_inter"/>
    <property type="match status" value="1"/>
</dbReference>
<dbReference type="SMART" id="SM00487">
    <property type="entry name" value="DEXDc"/>
    <property type="match status" value="1"/>
</dbReference>
<dbReference type="SMART" id="SM00490">
    <property type="entry name" value="HELICc"/>
    <property type="match status" value="1"/>
</dbReference>
<dbReference type="SUPFAM" id="SSF46600">
    <property type="entry name" value="C-terminal UvrC-binding domain of UvrB"/>
    <property type="match status" value="1"/>
</dbReference>
<dbReference type="SUPFAM" id="SSF52540">
    <property type="entry name" value="P-loop containing nucleoside triphosphate hydrolases"/>
    <property type="match status" value="2"/>
</dbReference>
<dbReference type="PROSITE" id="PS51192">
    <property type="entry name" value="HELICASE_ATP_BIND_1"/>
    <property type="match status" value="1"/>
</dbReference>
<dbReference type="PROSITE" id="PS51194">
    <property type="entry name" value="HELICASE_CTER"/>
    <property type="match status" value="1"/>
</dbReference>
<dbReference type="PROSITE" id="PS50151">
    <property type="entry name" value="UVR"/>
    <property type="match status" value="1"/>
</dbReference>
<sequence>MSKPFKLNSAFKPSGDQPEAIRRLEEGLEDGLAHQTLLGVTGSGKTFTIANVIADLQRPTMVLAPNKTLAAQLYGEMKEFFPENAVEYFVSYYDYYQPEAYVPSSDTFIEKDASVNEHIEQMRLSATKAMLERRDVVVVASVSAIYGLGDPDLYLKMMLHLTVGMIIDQRAILRRLAELQYARNDQAFQRGTFRVRGEVIDIFPAESDDIALRVXLFDEEVERLSLFDPLTGQIVSTIPRFTIYPKTHYVTPRERIVQAMEEIKEELAARRKVLLENNKLMEEQRLTQRTQFDLEMMNELGYCSGIENYSRFLSGRGPGEPPPTLFDYLPADGLLVVDESHVTIPQIGGMYRGDRARKETLVEYGFRLPSALDNRPLKFEEFEALAPQTIYVSATPGNYELEKSGGDVVDQVVRPTGLLDPIIEVRPVATQVDDLLSEIRQRAAINERVLVTTLTKRMAEDLTEYLEEHGERVRYLHSDIDTVERMEIIRDLRLGEFDVLVGINLLREGLDMPEVSLVAILDADKEGFLRSERSLIQTIGRAARNVNGKAILYGDKITPSMAKAIGETERRREKQQKYNEEHGITPQGLNKKVVDILALGQNIAKTKAKGRGKSRPIVEPDNVPMDMSPKALQQKIHELEGLMMQHAQNLEFEEAAQIRDQLHQLRELFIAAS</sequence>
<organism>
    <name type="scientific">Escherichia coli O6:H1 (strain CFT073 / ATCC 700928 / UPEC)</name>
    <dbReference type="NCBI Taxonomy" id="199310"/>
    <lineage>
        <taxon>Bacteria</taxon>
        <taxon>Pseudomonadati</taxon>
        <taxon>Pseudomonadota</taxon>
        <taxon>Gammaproteobacteria</taxon>
        <taxon>Enterobacterales</taxon>
        <taxon>Enterobacteriaceae</taxon>
        <taxon>Escherichia</taxon>
    </lineage>
</organism>
<accession>Q8FJP8</accession>
<feature type="initiator methionine" description="Removed" evidence="1">
    <location>
        <position position="1"/>
    </location>
</feature>
<feature type="chain" id="PRO_0000138392" description="UvrABC system protein B">
    <location>
        <begin position="2"/>
        <end position="673"/>
    </location>
</feature>
<feature type="domain" description="Helicase ATP-binding" evidence="2">
    <location>
        <begin position="26"/>
        <end position="415"/>
    </location>
</feature>
<feature type="domain" description="Helicase C-terminal" evidence="2">
    <location>
        <begin position="431"/>
        <end position="597"/>
    </location>
</feature>
<feature type="domain" description="UVR" evidence="2">
    <location>
        <begin position="633"/>
        <end position="668"/>
    </location>
</feature>
<feature type="region of interest" description="Disordered" evidence="3">
    <location>
        <begin position="608"/>
        <end position="627"/>
    </location>
</feature>
<feature type="short sequence motif" description="Beta-hairpin">
    <location>
        <begin position="92"/>
        <end position="115"/>
    </location>
</feature>
<feature type="binding site" evidence="2">
    <location>
        <begin position="39"/>
        <end position="46"/>
    </location>
    <ligand>
        <name>ATP</name>
        <dbReference type="ChEBI" id="CHEBI:30616"/>
    </ligand>
</feature>
<keyword id="KW-0067">ATP-binding</keyword>
<keyword id="KW-0963">Cytoplasm</keyword>
<keyword id="KW-0227">DNA damage</keyword>
<keyword id="KW-0228">DNA excision</keyword>
<keyword id="KW-0234">DNA repair</keyword>
<keyword id="KW-0267">Excision nuclease</keyword>
<keyword id="KW-0547">Nucleotide-binding</keyword>
<keyword id="KW-1185">Reference proteome</keyword>
<keyword id="KW-0742">SOS response</keyword>
<proteinExistence type="inferred from homology"/>
<reference key="1">
    <citation type="journal article" date="2002" name="Proc. Natl. Acad. Sci. U.S.A.">
        <title>Extensive mosaic structure revealed by the complete genome sequence of uropathogenic Escherichia coli.</title>
        <authorList>
            <person name="Welch R.A."/>
            <person name="Burland V."/>
            <person name="Plunkett G. III"/>
            <person name="Redford P."/>
            <person name="Roesch P."/>
            <person name="Rasko D."/>
            <person name="Buckles E.L."/>
            <person name="Liou S.-R."/>
            <person name="Boutin A."/>
            <person name="Hackett J."/>
            <person name="Stroud D."/>
            <person name="Mayhew G.F."/>
            <person name="Rose D.J."/>
            <person name="Zhou S."/>
            <person name="Schwartz D.C."/>
            <person name="Perna N.T."/>
            <person name="Mobley H.L.T."/>
            <person name="Donnenberg M.S."/>
            <person name="Blattner F.R."/>
        </authorList>
    </citation>
    <scope>NUCLEOTIDE SEQUENCE [LARGE SCALE GENOMIC DNA]</scope>
    <source>
        <strain>CFT073 / ATCC 700928 / UPEC</strain>
    </source>
</reference>
<evidence type="ECO:0000250" key="1"/>
<evidence type="ECO:0000255" key="2">
    <source>
        <dbReference type="HAMAP-Rule" id="MF_00204"/>
    </source>
</evidence>
<evidence type="ECO:0000256" key="3">
    <source>
        <dbReference type="SAM" id="MobiDB-lite"/>
    </source>
</evidence>
<protein>
    <recommendedName>
        <fullName evidence="2">UvrABC system protein B</fullName>
        <shortName evidence="2">Protein UvrB</shortName>
    </recommendedName>
    <alternativeName>
        <fullName evidence="2">Excinuclease ABC subunit B</fullName>
    </alternativeName>
</protein>